<reference key="1">
    <citation type="journal article" date="1999" name="Nat. Genet.">
        <title>Comparative genomes of Chlamydia pneumoniae and C. trachomatis.</title>
        <authorList>
            <person name="Kalman S."/>
            <person name="Mitchell W.P."/>
            <person name="Marathe R."/>
            <person name="Lammel C.J."/>
            <person name="Fan J."/>
            <person name="Hyman R.W."/>
            <person name="Olinger L."/>
            <person name="Grimwood J."/>
            <person name="Davis R.W."/>
            <person name="Stephens R.S."/>
        </authorList>
    </citation>
    <scope>NUCLEOTIDE SEQUENCE [LARGE SCALE GENOMIC DNA]</scope>
    <source>
        <strain>CWL029</strain>
    </source>
</reference>
<reference key="2">
    <citation type="journal article" date="2000" name="Nucleic Acids Res.">
        <title>Genome sequences of Chlamydia trachomatis MoPn and Chlamydia pneumoniae AR39.</title>
        <authorList>
            <person name="Read T.D."/>
            <person name="Brunham R.C."/>
            <person name="Shen C."/>
            <person name="Gill S.R."/>
            <person name="Heidelberg J.F."/>
            <person name="White O."/>
            <person name="Hickey E.K."/>
            <person name="Peterson J.D."/>
            <person name="Utterback T.R."/>
            <person name="Berry K.J."/>
            <person name="Bass S."/>
            <person name="Linher K.D."/>
            <person name="Weidman J.F."/>
            <person name="Khouri H.M."/>
            <person name="Craven B."/>
            <person name="Bowman C."/>
            <person name="Dodson R.J."/>
            <person name="Gwinn M.L."/>
            <person name="Nelson W.C."/>
            <person name="DeBoy R.T."/>
            <person name="Kolonay J.F."/>
            <person name="McClarty G."/>
            <person name="Salzberg S.L."/>
            <person name="Eisen J.A."/>
            <person name="Fraser C.M."/>
        </authorList>
    </citation>
    <scope>NUCLEOTIDE SEQUENCE [LARGE SCALE GENOMIC DNA]</scope>
    <source>
        <strain>AR39</strain>
    </source>
</reference>
<reference key="3">
    <citation type="journal article" date="2000" name="Nucleic Acids Res.">
        <title>Comparison of whole genome sequences of Chlamydia pneumoniae J138 from Japan and CWL029 from USA.</title>
        <authorList>
            <person name="Shirai M."/>
            <person name="Hirakawa H."/>
            <person name="Kimoto M."/>
            <person name="Tabuchi M."/>
            <person name="Kishi F."/>
            <person name="Ouchi K."/>
            <person name="Shiba T."/>
            <person name="Ishii K."/>
            <person name="Hattori M."/>
            <person name="Kuhara S."/>
            <person name="Nakazawa T."/>
        </authorList>
    </citation>
    <scope>NUCLEOTIDE SEQUENCE [LARGE SCALE GENOMIC DNA]</scope>
    <source>
        <strain>J138</strain>
    </source>
</reference>
<reference key="4">
    <citation type="submission" date="2002-05" db="EMBL/GenBank/DDBJ databases">
        <title>The genome sequence of Chlamydia pneumoniae TW183 and comparison with other Chlamydia strains based on whole genome sequence analysis.</title>
        <authorList>
            <person name="Geng M.M."/>
            <person name="Schuhmacher A."/>
            <person name="Muehldorfer I."/>
            <person name="Bensch K.W."/>
            <person name="Schaefer K.P."/>
            <person name="Schneider S."/>
            <person name="Pohl T."/>
            <person name="Essig A."/>
            <person name="Marre R."/>
            <person name="Melchers K."/>
        </authorList>
    </citation>
    <scope>NUCLEOTIDE SEQUENCE [LARGE SCALE GENOMIC DNA]</scope>
    <source>
        <strain>TW-183</strain>
    </source>
</reference>
<feature type="chain" id="PRO_0000140726" description="3-dehydroquinate synthase">
    <location>
        <begin position="1"/>
        <end position="380"/>
    </location>
</feature>
<feature type="binding site" evidence="2">
    <location>
        <begin position="68"/>
        <end position="73"/>
    </location>
    <ligand>
        <name>NAD(+)</name>
        <dbReference type="ChEBI" id="CHEBI:57540"/>
    </ligand>
</feature>
<feature type="binding site" evidence="2">
    <location>
        <begin position="102"/>
        <end position="106"/>
    </location>
    <ligand>
        <name>NAD(+)</name>
        <dbReference type="ChEBI" id="CHEBI:57540"/>
    </ligand>
</feature>
<feature type="binding site" evidence="2">
    <location>
        <begin position="126"/>
        <end position="127"/>
    </location>
    <ligand>
        <name>NAD(+)</name>
        <dbReference type="ChEBI" id="CHEBI:57540"/>
    </ligand>
</feature>
<feature type="binding site" evidence="2">
    <location>
        <position position="139"/>
    </location>
    <ligand>
        <name>NAD(+)</name>
        <dbReference type="ChEBI" id="CHEBI:57540"/>
    </ligand>
</feature>
<feature type="binding site" evidence="3">
    <location>
        <position position="148"/>
    </location>
    <ligand>
        <name>NAD(+)</name>
        <dbReference type="ChEBI" id="CHEBI:57540"/>
    </ligand>
</feature>
<feature type="binding site" evidence="2">
    <location>
        <position position="181"/>
    </location>
    <ligand>
        <name>Zn(2+)</name>
        <dbReference type="ChEBI" id="CHEBI:29105"/>
    </ligand>
</feature>
<feature type="binding site" evidence="2">
    <location>
        <position position="243"/>
    </location>
    <ligand>
        <name>Zn(2+)</name>
        <dbReference type="ChEBI" id="CHEBI:29105"/>
    </ligand>
</feature>
<feature type="binding site" evidence="2">
    <location>
        <position position="259"/>
    </location>
    <ligand>
        <name>Zn(2+)</name>
        <dbReference type="ChEBI" id="CHEBI:29105"/>
    </ligand>
</feature>
<evidence type="ECO:0000250" key="1">
    <source>
        <dbReference type="UniProtKB" id="P07639"/>
    </source>
</evidence>
<evidence type="ECO:0000250" key="2">
    <source>
        <dbReference type="UniProtKB" id="P9WPX9"/>
    </source>
</evidence>
<evidence type="ECO:0000250" key="3">
    <source>
        <dbReference type="UniProtKB" id="Q6GGU4"/>
    </source>
</evidence>
<evidence type="ECO:0000305" key="4"/>
<sequence>MMSETIITTPHVVKLISNFFQKKLFSSISTAYPLVIITDVSVQQHLLGPILDHIKMLGYQVIVLTFPPGEPNKTWETFISLQYQLVDQNISPKSSIIGIGGGTVLDMTGFLAATYCRGLPLYLIPTTITAMVDTSIGGKNGINLRGIKNRLGTFYLPKEVWMCPQFLSTLPREEWYHGIAEAIKHGFIADAYLWEFLNSHSKMLFSSSQILHEFIKRNCQIKAAIVAEDPYDRSLRKILNFGHSIAHAIETLAKGTVNHGQAVSVGMMIETRISLAEGVMKTPQLIDQLERLLKRFNLPSTLKDLQSIVPEHLHNSLYSPENIIYTLGYDKKNLSQHELKMIMIEHLGRAAPFNGTYCASPNMEILYDILWSECHVMRHC</sequence>
<comment type="function">
    <text evidence="1">Catalyzes the conversion of 3-deoxy-D-arabino-heptulosonate 7-phosphate (DAHP) to dehydroquinate (DHQ).</text>
</comment>
<comment type="catalytic activity">
    <reaction evidence="1">
        <text>7-phospho-2-dehydro-3-deoxy-D-arabino-heptonate = 3-dehydroquinate + phosphate</text>
        <dbReference type="Rhea" id="RHEA:21968"/>
        <dbReference type="ChEBI" id="CHEBI:32364"/>
        <dbReference type="ChEBI" id="CHEBI:43474"/>
        <dbReference type="ChEBI" id="CHEBI:58394"/>
        <dbReference type="EC" id="4.2.3.4"/>
    </reaction>
</comment>
<comment type="cofactor">
    <cofactor evidence="1">
        <name>NAD(+)</name>
        <dbReference type="ChEBI" id="CHEBI:57540"/>
    </cofactor>
</comment>
<comment type="cofactor">
    <cofactor evidence="1">
        <name>Co(2+)</name>
        <dbReference type="ChEBI" id="CHEBI:48828"/>
    </cofactor>
    <cofactor evidence="1">
        <name>Zn(2+)</name>
        <dbReference type="ChEBI" id="CHEBI:29105"/>
    </cofactor>
    <text evidence="1">Binds 1 divalent metal cation per subunit. Can use either Co(2+) or Zn(2+).</text>
</comment>
<comment type="pathway">
    <text evidence="1">Metabolic intermediate biosynthesis; chorismate biosynthesis; chorismate from D-erythrose 4-phosphate and phosphoenolpyruvate: step 2/7.</text>
</comment>
<comment type="subcellular location">
    <subcellularLocation>
        <location evidence="1">Cytoplasm</location>
    </subcellularLocation>
</comment>
<comment type="similarity">
    <text evidence="4">Belongs to the sugar phosphate cyclases superfamily. Dehydroquinate synthase family.</text>
</comment>
<comment type="sequence caution" evidence="4">
    <conflict type="erroneous initiation">
        <sequence resource="EMBL-CDS" id="AAD19173"/>
    </conflict>
</comment>
<comment type="sequence caution" evidence="4">
    <conflict type="erroneous initiation">
        <sequence resource="EMBL-CDS" id="AAF73707"/>
    </conflict>
</comment>
<comment type="sequence caution" evidence="4">
    <conflict type="erroneous initiation">
        <sequence resource="EMBL-CDS" id="BAA99243"/>
    </conflict>
</comment>
<accession>Q9Z6M3</accession>
<accession>Q9JQA9</accession>
<name>AROB_CHLPN</name>
<proteinExistence type="inferred from homology"/>
<dbReference type="EC" id="4.2.3.4" evidence="1"/>
<dbReference type="EMBL" id="AE001363">
    <property type="protein sequence ID" value="AAD19173.1"/>
    <property type="status" value="ALT_INIT"/>
    <property type="molecule type" value="Genomic_DNA"/>
</dbReference>
<dbReference type="EMBL" id="AE002161">
    <property type="protein sequence ID" value="AAF73707.1"/>
    <property type="status" value="ALT_INIT"/>
    <property type="molecule type" value="Genomic_DNA"/>
</dbReference>
<dbReference type="EMBL" id="BA000008">
    <property type="protein sequence ID" value="BAA99243.1"/>
    <property type="status" value="ALT_INIT"/>
    <property type="molecule type" value="Genomic_DNA"/>
</dbReference>
<dbReference type="EMBL" id="AE009440">
    <property type="protein sequence ID" value="AAP99005.1"/>
    <property type="molecule type" value="Genomic_DNA"/>
</dbReference>
<dbReference type="PIR" id="A86620">
    <property type="entry name" value="A86620"/>
</dbReference>
<dbReference type="PIR" id="H72003">
    <property type="entry name" value="H72003"/>
</dbReference>
<dbReference type="RefSeq" id="NP_225230.1">
    <property type="nucleotide sequence ID" value="NC_000922.1"/>
</dbReference>
<dbReference type="SMR" id="Q9Z6M3"/>
<dbReference type="STRING" id="406984.CPK_ORF00463"/>
<dbReference type="KEGG" id="cpa:CP_0816"/>
<dbReference type="KEGG" id="cpj:aroB"/>
<dbReference type="KEGG" id="cpn:CPn_1036"/>
<dbReference type="KEGG" id="cpt:CpB1076"/>
<dbReference type="PATRIC" id="fig|115713.3.peg.1134"/>
<dbReference type="eggNOG" id="COG0337">
    <property type="taxonomic scope" value="Bacteria"/>
</dbReference>
<dbReference type="HOGENOM" id="CLU_001201_0_1_0"/>
<dbReference type="UniPathway" id="UPA00053">
    <property type="reaction ID" value="UER00085"/>
</dbReference>
<dbReference type="Proteomes" id="UP000000583">
    <property type="component" value="Chromosome"/>
</dbReference>
<dbReference type="Proteomes" id="UP000000801">
    <property type="component" value="Chromosome"/>
</dbReference>
<dbReference type="GO" id="GO:0005737">
    <property type="term" value="C:cytoplasm"/>
    <property type="evidence" value="ECO:0007669"/>
    <property type="project" value="UniProtKB-SubCell"/>
</dbReference>
<dbReference type="GO" id="GO:0003856">
    <property type="term" value="F:3-dehydroquinate synthase activity"/>
    <property type="evidence" value="ECO:0007669"/>
    <property type="project" value="UniProtKB-EC"/>
</dbReference>
<dbReference type="GO" id="GO:0046872">
    <property type="term" value="F:metal ion binding"/>
    <property type="evidence" value="ECO:0007669"/>
    <property type="project" value="UniProtKB-KW"/>
</dbReference>
<dbReference type="GO" id="GO:0000166">
    <property type="term" value="F:nucleotide binding"/>
    <property type="evidence" value="ECO:0007669"/>
    <property type="project" value="UniProtKB-KW"/>
</dbReference>
<dbReference type="GO" id="GO:0008652">
    <property type="term" value="P:amino acid biosynthetic process"/>
    <property type="evidence" value="ECO:0007669"/>
    <property type="project" value="UniProtKB-KW"/>
</dbReference>
<dbReference type="GO" id="GO:0009073">
    <property type="term" value="P:aromatic amino acid family biosynthetic process"/>
    <property type="evidence" value="ECO:0007669"/>
    <property type="project" value="UniProtKB-KW"/>
</dbReference>
<dbReference type="GO" id="GO:0009423">
    <property type="term" value="P:chorismate biosynthetic process"/>
    <property type="evidence" value="ECO:0007669"/>
    <property type="project" value="UniProtKB-UniPathway"/>
</dbReference>
<dbReference type="CDD" id="cd08195">
    <property type="entry name" value="DHQS"/>
    <property type="match status" value="1"/>
</dbReference>
<dbReference type="Gene3D" id="3.40.50.1970">
    <property type="match status" value="1"/>
</dbReference>
<dbReference type="Gene3D" id="1.20.1090.10">
    <property type="entry name" value="Dehydroquinate synthase-like - alpha domain"/>
    <property type="match status" value="1"/>
</dbReference>
<dbReference type="InterPro" id="IPR050071">
    <property type="entry name" value="Dehydroquinate_synthase"/>
</dbReference>
<dbReference type="InterPro" id="IPR016037">
    <property type="entry name" value="DHQ_synth_AroB"/>
</dbReference>
<dbReference type="InterPro" id="IPR030963">
    <property type="entry name" value="DHQ_synth_fam"/>
</dbReference>
<dbReference type="InterPro" id="IPR030960">
    <property type="entry name" value="DHQS/DOIS_N"/>
</dbReference>
<dbReference type="InterPro" id="IPR056179">
    <property type="entry name" value="DHQS_C"/>
</dbReference>
<dbReference type="NCBIfam" id="TIGR01357">
    <property type="entry name" value="aroB"/>
    <property type="match status" value="1"/>
</dbReference>
<dbReference type="PANTHER" id="PTHR43622">
    <property type="entry name" value="3-DEHYDROQUINATE SYNTHASE"/>
    <property type="match status" value="1"/>
</dbReference>
<dbReference type="PANTHER" id="PTHR43622:SF7">
    <property type="entry name" value="3-DEHYDROQUINATE SYNTHASE, CHLOROPLASTIC"/>
    <property type="match status" value="1"/>
</dbReference>
<dbReference type="Pfam" id="PF01761">
    <property type="entry name" value="DHQ_synthase"/>
    <property type="match status" value="1"/>
</dbReference>
<dbReference type="Pfam" id="PF24621">
    <property type="entry name" value="DHQS_C"/>
    <property type="match status" value="1"/>
</dbReference>
<dbReference type="PIRSF" id="PIRSF001455">
    <property type="entry name" value="DHQ_synth"/>
    <property type="match status" value="1"/>
</dbReference>
<dbReference type="SUPFAM" id="SSF56796">
    <property type="entry name" value="Dehydroquinate synthase-like"/>
    <property type="match status" value="1"/>
</dbReference>
<keyword id="KW-0028">Amino-acid biosynthesis</keyword>
<keyword id="KW-0057">Aromatic amino acid biosynthesis</keyword>
<keyword id="KW-0170">Cobalt</keyword>
<keyword id="KW-0963">Cytoplasm</keyword>
<keyword id="KW-0456">Lyase</keyword>
<keyword id="KW-0479">Metal-binding</keyword>
<keyword id="KW-0520">NAD</keyword>
<keyword id="KW-0547">Nucleotide-binding</keyword>
<keyword id="KW-0862">Zinc</keyword>
<gene>
    <name type="primary">aroB</name>
    <name type="ordered locus">CPn_1036</name>
    <name type="ordered locus">CP_0816</name>
    <name type="ordered locus">CpB1076</name>
</gene>
<protein>
    <recommendedName>
        <fullName evidence="1">3-dehydroquinate synthase</fullName>
        <shortName evidence="1">DHQS</shortName>
        <ecNumber evidence="1">4.2.3.4</ecNumber>
    </recommendedName>
</protein>
<organism>
    <name type="scientific">Chlamydia pneumoniae</name>
    <name type="common">Chlamydophila pneumoniae</name>
    <dbReference type="NCBI Taxonomy" id="83558"/>
    <lineage>
        <taxon>Bacteria</taxon>
        <taxon>Pseudomonadati</taxon>
        <taxon>Chlamydiota</taxon>
        <taxon>Chlamydiia</taxon>
        <taxon>Chlamydiales</taxon>
        <taxon>Chlamydiaceae</taxon>
        <taxon>Chlamydia/Chlamydophila group</taxon>
        <taxon>Chlamydia</taxon>
    </lineage>
</organism>